<feature type="chain" id="PRO_0000411317" description="DegV domain-containing protein SPs1668">
    <location>
        <begin position="1"/>
        <end position="286"/>
    </location>
</feature>
<feature type="domain" description="DegV" evidence="3">
    <location>
        <begin position="3"/>
        <end position="282"/>
    </location>
</feature>
<feature type="binding site" evidence="2">
    <location>
        <position position="62"/>
    </location>
    <ligand>
        <name>hexadecanoate</name>
        <dbReference type="ChEBI" id="CHEBI:7896"/>
    </ligand>
</feature>
<feature type="binding site" evidence="2">
    <location>
        <position position="94"/>
    </location>
    <ligand>
        <name>hexadecanoate</name>
        <dbReference type="ChEBI" id="CHEBI:7896"/>
    </ligand>
</feature>
<dbReference type="EMBL" id="BA000034">
    <property type="protein sequence ID" value="BAC64763.1"/>
    <property type="molecule type" value="Genomic_DNA"/>
</dbReference>
<dbReference type="RefSeq" id="WP_011055009.1">
    <property type="nucleotide sequence ID" value="NC_004606.1"/>
</dbReference>
<dbReference type="SMR" id="P0DA59"/>
<dbReference type="KEGG" id="sps:SPs1668"/>
<dbReference type="HOGENOM" id="CLU_048251_4_1_9"/>
<dbReference type="GO" id="GO:0008289">
    <property type="term" value="F:lipid binding"/>
    <property type="evidence" value="ECO:0007669"/>
    <property type="project" value="UniProtKB-KW"/>
</dbReference>
<dbReference type="Gene3D" id="3.30.1180.10">
    <property type="match status" value="1"/>
</dbReference>
<dbReference type="Gene3D" id="2.20.28.50">
    <property type="entry name" value="degv family protein"/>
    <property type="match status" value="1"/>
</dbReference>
<dbReference type="Gene3D" id="3.40.50.10440">
    <property type="entry name" value="Dihydroxyacetone kinase, domain 1"/>
    <property type="match status" value="1"/>
</dbReference>
<dbReference type="InterPro" id="IPR003797">
    <property type="entry name" value="DegV"/>
</dbReference>
<dbReference type="InterPro" id="IPR043168">
    <property type="entry name" value="DegV_C"/>
</dbReference>
<dbReference type="InterPro" id="IPR050270">
    <property type="entry name" value="DegV_domain_contain"/>
</dbReference>
<dbReference type="NCBIfam" id="TIGR00762">
    <property type="entry name" value="DegV"/>
    <property type="match status" value="1"/>
</dbReference>
<dbReference type="PANTHER" id="PTHR33434">
    <property type="entry name" value="DEGV DOMAIN-CONTAINING PROTEIN DR_1986-RELATED"/>
    <property type="match status" value="1"/>
</dbReference>
<dbReference type="PANTHER" id="PTHR33434:SF2">
    <property type="entry name" value="FATTY ACID-BINDING PROTEIN TM_1468"/>
    <property type="match status" value="1"/>
</dbReference>
<dbReference type="Pfam" id="PF02645">
    <property type="entry name" value="DegV"/>
    <property type="match status" value="1"/>
</dbReference>
<dbReference type="SUPFAM" id="SSF82549">
    <property type="entry name" value="DAK1/DegV-like"/>
    <property type="match status" value="1"/>
</dbReference>
<dbReference type="PROSITE" id="PS51482">
    <property type="entry name" value="DEGV"/>
    <property type="match status" value="1"/>
</dbReference>
<name>Y1667_STRPQ</name>
<protein>
    <recommendedName>
        <fullName>DegV domain-containing protein SPs1668</fullName>
    </recommendedName>
</protein>
<sequence length="286" mass="31327">MTFTIMTDSTADLNQTWAEDHDIVLIGLTILCDGEVYETVGPNRISSDYLLKKMKAGSHPQTSQINVGEFEKVFREHARNNKALLYLAFSSVLSGTYQSALMACDLVREDYPDAVIEIVDTLAAAGGEGYLTILAAEARDSGKNLLETKDIVEAVIPRLRTYFLVDDLFHLMRGGRLSKGSAFLGSLASIKPLLWIDEEGKLVPIAKIRGRQKAIKEMVAQVEKDIADSTVIVSYTSDQGSAEKLREELLAHENISDVLMMPLGPVISAHVGPNTLAVFVIGQNSR</sequence>
<organism>
    <name type="scientific">Streptococcus pyogenes serotype M3 (strain SSI-1)</name>
    <dbReference type="NCBI Taxonomy" id="193567"/>
    <lineage>
        <taxon>Bacteria</taxon>
        <taxon>Bacillati</taxon>
        <taxon>Bacillota</taxon>
        <taxon>Bacilli</taxon>
        <taxon>Lactobacillales</taxon>
        <taxon>Streptococcaceae</taxon>
        <taxon>Streptococcus</taxon>
    </lineage>
</organism>
<proteinExistence type="inferred from homology"/>
<comment type="function">
    <text evidence="1">May bind long-chain fatty acids, such as palmitate, and may play a role in lipid transport or fatty acid metabolism.</text>
</comment>
<gene>
    <name type="ordered locus">SPs1668</name>
</gene>
<accession>P0DA59</accession>
<accession>Q8K5U1</accession>
<keyword id="KW-0446">Lipid-binding</keyword>
<reference key="1">
    <citation type="journal article" date="2003" name="Genome Res.">
        <title>Genome sequence of an M3 strain of Streptococcus pyogenes reveals a large-scale genomic rearrangement in invasive strains and new insights into phage evolution.</title>
        <authorList>
            <person name="Nakagawa I."/>
            <person name="Kurokawa K."/>
            <person name="Yamashita A."/>
            <person name="Nakata M."/>
            <person name="Tomiyasu Y."/>
            <person name="Okahashi N."/>
            <person name="Kawabata S."/>
            <person name="Yamazaki K."/>
            <person name="Shiba T."/>
            <person name="Yasunaga T."/>
            <person name="Hayashi H."/>
            <person name="Hattori M."/>
            <person name="Hamada S."/>
        </authorList>
    </citation>
    <scope>NUCLEOTIDE SEQUENCE [LARGE SCALE GENOMIC DNA]</scope>
    <source>
        <strain>SSI-1</strain>
    </source>
</reference>
<evidence type="ECO:0000250" key="1"/>
<evidence type="ECO:0000250" key="2">
    <source>
        <dbReference type="UniProtKB" id="Q9X1H9"/>
    </source>
</evidence>
<evidence type="ECO:0000255" key="3">
    <source>
        <dbReference type="PROSITE-ProRule" id="PRU00815"/>
    </source>
</evidence>